<organism>
    <name type="scientific">Cereibacter sphaeroides (strain ATCC 17023 / DSM 158 / JCM 6121 / CCUG 31486 / LMG 2827 / NBRC 12203 / NCIMB 8253 / ATH 2.4.1.)</name>
    <name type="common">Rhodobacter sphaeroides</name>
    <dbReference type="NCBI Taxonomy" id="272943"/>
    <lineage>
        <taxon>Bacteria</taxon>
        <taxon>Pseudomonadati</taxon>
        <taxon>Pseudomonadota</taxon>
        <taxon>Alphaproteobacteria</taxon>
        <taxon>Rhodobacterales</taxon>
        <taxon>Paracoccaceae</taxon>
        <taxon>Cereibacter</taxon>
    </lineage>
</organism>
<evidence type="ECO:0000255" key="1">
    <source>
        <dbReference type="HAMAP-Rule" id="MF_00607"/>
    </source>
</evidence>
<dbReference type="EC" id="2.1.1.182" evidence="1"/>
<dbReference type="EMBL" id="CP000143">
    <property type="protein sequence ID" value="ABA79065.1"/>
    <property type="molecule type" value="Genomic_DNA"/>
</dbReference>
<dbReference type="RefSeq" id="WP_011337834.1">
    <property type="nucleotide sequence ID" value="NC_007493.2"/>
</dbReference>
<dbReference type="RefSeq" id="YP_352966.1">
    <property type="nucleotide sequence ID" value="NC_007493.2"/>
</dbReference>
<dbReference type="SMR" id="Q3J2B9"/>
<dbReference type="STRING" id="272943.RSP_2905"/>
<dbReference type="EnsemblBacteria" id="ABA79065">
    <property type="protein sequence ID" value="ABA79065"/>
    <property type="gene ID" value="RSP_2905"/>
</dbReference>
<dbReference type="GeneID" id="3720644"/>
<dbReference type="KEGG" id="rsp:RSP_2905"/>
<dbReference type="PATRIC" id="fig|272943.9.peg.1841"/>
<dbReference type="eggNOG" id="COG0030">
    <property type="taxonomic scope" value="Bacteria"/>
</dbReference>
<dbReference type="OrthoDB" id="9814755at2"/>
<dbReference type="PhylomeDB" id="Q3J2B9"/>
<dbReference type="Proteomes" id="UP000002703">
    <property type="component" value="Chromosome 1"/>
</dbReference>
<dbReference type="GO" id="GO:0005829">
    <property type="term" value="C:cytosol"/>
    <property type="evidence" value="ECO:0007669"/>
    <property type="project" value="TreeGrafter"/>
</dbReference>
<dbReference type="GO" id="GO:0052908">
    <property type="term" value="F:16S rRNA (adenine(1518)-N(6)/adenine(1519)-N(6))-dimethyltransferase activity"/>
    <property type="evidence" value="ECO:0007669"/>
    <property type="project" value="UniProtKB-EC"/>
</dbReference>
<dbReference type="GO" id="GO:0003723">
    <property type="term" value="F:RNA binding"/>
    <property type="evidence" value="ECO:0007669"/>
    <property type="project" value="UniProtKB-KW"/>
</dbReference>
<dbReference type="CDD" id="cd02440">
    <property type="entry name" value="AdoMet_MTases"/>
    <property type="match status" value="1"/>
</dbReference>
<dbReference type="FunFam" id="1.10.8.100:FF:000001">
    <property type="entry name" value="Ribosomal RNA small subunit methyltransferase A"/>
    <property type="match status" value="1"/>
</dbReference>
<dbReference type="Gene3D" id="1.10.8.100">
    <property type="entry name" value="Ribosomal RNA adenine dimethylase-like, domain 2"/>
    <property type="match status" value="1"/>
</dbReference>
<dbReference type="Gene3D" id="3.40.50.150">
    <property type="entry name" value="Vaccinia Virus protein VP39"/>
    <property type="match status" value="1"/>
</dbReference>
<dbReference type="HAMAP" id="MF_00607">
    <property type="entry name" value="16SrRNA_methyltr_A"/>
    <property type="match status" value="1"/>
</dbReference>
<dbReference type="InterPro" id="IPR001737">
    <property type="entry name" value="KsgA/Erm"/>
</dbReference>
<dbReference type="InterPro" id="IPR023165">
    <property type="entry name" value="rRNA_Ade_diMease-like_C"/>
</dbReference>
<dbReference type="InterPro" id="IPR020596">
    <property type="entry name" value="rRNA_Ade_Mease_Trfase_CS"/>
</dbReference>
<dbReference type="InterPro" id="IPR020598">
    <property type="entry name" value="rRNA_Ade_methylase_Trfase_N"/>
</dbReference>
<dbReference type="InterPro" id="IPR011530">
    <property type="entry name" value="rRNA_adenine_dimethylase"/>
</dbReference>
<dbReference type="InterPro" id="IPR029063">
    <property type="entry name" value="SAM-dependent_MTases_sf"/>
</dbReference>
<dbReference type="NCBIfam" id="TIGR00755">
    <property type="entry name" value="ksgA"/>
    <property type="match status" value="1"/>
</dbReference>
<dbReference type="PANTHER" id="PTHR11727">
    <property type="entry name" value="DIMETHYLADENOSINE TRANSFERASE"/>
    <property type="match status" value="1"/>
</dbReference>
<dbReference type="PANTHER" id="PTHR11727:SF7">
    <property type="entry name" value="DIMETHYLADENOSINE TRANSFERASE-RELATED"/>
    <property type="match status" value="1"/>
</dbReference>
<dbReference type="Pfam" id="PF00398">
    <property type="entry name" value="RrnaAD"/>
    <property type="match status" value="1"/>
</dbReference>
<dbReference type="SMART" id="SM00650">
    <property type="entry name" value="rADc"/>
    <property type="match status" value="1"/>
</dbReference>
<dbReference type="SUPFAM" id="SSF53335">
    <property type="entry name" value="S-adenosyl-L-methionine-dependent methyltransferases"/>
    <property type="match status" value="1"/>
</dbReference>
<dbReference type="PROSITE" id="PS01131">
    <property type="entry name" value="RRNA_A_DIMETH"/>
    <property type="match status" value="1"/>
</dbReference>
<dbReference type="PROSITE" id="PS51689">
    <property type="entry name" value="SAM_RNA_A_N6_MT"/>
    <property type="match status" value="1"/>
</dbReference>
<keyword id="KW-0963">Cytoplasm</keyword>
<keyword id="KW-0489">Methyltransferase</keyword>
<keyword id="KW-1185">Reference proteome</keyword>
<keyword id="KW-0694">RNA-binding</keyword>
<keyword id="KW-0698">rRNA processing</keyword>
<keyword id="KW-0949">S-adenosyl-L-methionine</keyword>
<keyword id="KW-0808">Transferase</keyword>
<accession>Q3J2B9</accession>
<protein>
    <recommendedName>
        <fullName evidence="1">Ribosomal RNA small subunit methyltransferase A</fullName>
        <ecNumber evidence="1">2.1.1.182</ecNumber>
    </recommendedName>
    <alternativeName>
        <fullName evidence="1">16S rRNA (adenine(1518)-N(6)/adenine(1519)-N(6))-dimethyltransferase</fullName>
    </alternativeName>
    <alternativeName>
        <fullName evidence="1">16S rRNA dimethyladenosine transferase</fullName>
    </alternativeName>
    <alternativeName>
        <fullName evidence="1">16S rRNA dimethylase</fullName>
    </alternativeName>
    <alternativeName>
        <fullName evidence="1">S-adenosylmethionine-6-N', N'-adenosyl(rRNA) dimethyltransferase</fullName>
    </alternativeName>
</protein>
<name>RSMA_CERS4</name>
<comment type="function">
    <text evidence="1">Specifically dimethylates two adjacent adenosines (A1518 and A1519) in the loop of a conserved hairpin near the 3'-end of 16S rRNA in the 30S particle. May play a critical role in biogenesis of 30S subunits.</text>
</comment>
<comment type="catalytic activity">
    <reaction evidence="1">
        <text>adenosine(1518)/adenosine(1519) in 16S rRNA + 4 S-adenosyl-L-methionine = N(6)-dimethyladenosine(1518)/N(6)-dimethyladenosine(1519) in 16S rRNA + 4 S-adenosyl-L-homocysteine + 4 H(+)</text>
        <dbReference type="Rhea" id="RHEA:19609"/>
        <dbReference type="Rhea" id="RHEA-COMP:10232"/>
        <dbReference type="Rhea" id="RHEA-COMP:10233"/>
        <dbReference type="ChEBI" id="CHEBI:15378"/>
        <dbReference type="ChEBI" id="CHEBI:57856"/>
        <dbReference type="ChEBI" id="CHEBI:59789"/>
        <dbReference type="ChEBI" id="CHEBI:74411"/>
        <dbReference type="ChEBI" id="CHEBI:74493"/>
        <dbReference type="EC" id="2.1.1.182"/>
    </reaction>
</comment>
<comment type="subcellular location">
    <subcellularLocation>
        <location evidence="1">Cytoplasm</location>
    </subcellularLocation>
</comment>
<comment type="similarity">
    <text evidence="1">Belongs to the class I-like SAM-binding methyltransferase superfamily. rRNA adenine N(6)-methyltransferase family. RsmA subfamily.</text>
</comment>
<reference key="1">
    <citation type="submission" date="2005-09" db="EMBL/GenBank/DDBJ databases">
        <title>Complete sequence of chromosome 1 of Rhodobacter sphaeroides 2.4.1.</title>
        <authorList>
            <person name="Copeland A."/>
            <person name="Lucas S."/>
            <person name="Lapidus A."/>
            <person name="Barry K."/>
            <person name="Detter J.C."/>
            <person name="Glavina T."/>
            <person name="Hammon N."/>
            <person name="Israni S."/>
            <person name="Pitluck S."/>
            <person name="Richardson P."/>
            <person name="Mackenzie C."/>
            <person name="Choudhary M."/>
            <person name="Larimer F."/>
            <person name="Hauser L.J."/>
            <person name="Land M."/>
            <person name="Donohue T.J."/>
            <person name="Kaplan S."/>
        </authorList>
    </citation>
    <scope>NUCLEOTIDE SEQUENCE [LARGE SCALE GENOMIC DNA]</scope>
    <source>
        <strain>ATCC 17023 / DSM 158 / JCM 6121 / CCUG 31486 / LMG 2827 / NBRC 12203 / NCIMB 8253 / ATH 2.4.1.</strain>
    </source>
</reference>
<sequence length="278" mass="30274">MASIDGLPPLREVIRAHGLSAKKQLGQNFLLDLNLTAKIARLAGDLTNSDVLEVGPGPGGLTRGLLAEGARRVLAIEKDARCLPALAEVAAAWPGRLEVLNADALEVDVAARLTPPIRIVANLPYNVGTELLTRWLSSDWPPFWESLTLMFQKEVAERIVAKPGSKAYGRLALLSQWRTDPKIVLTLPPDAFTPPPSIHSAVVHFTRLEAPRHPADPKVLARVTAMAFNQRRKMLRSSLKGLVPDIETVLREAGIEPTQRAEEIPLEGFCALARRLAG</sequence>
<feature type="chain" id="PRO_0000257336" description="Ribosomal RNA small subunit methyltransferase A">
    <location>
        <begin position="1"/>
        <end position="278"/>
    </location>
</feature>
<feature type="binding site" evidence="1">
    <location>
        <position position="28"/>
    </location>
    <ligand>
        <name>S-adenosyl-L-methionine</name>
        <dbReference type="ChEBI" id="CHEBI:59789"/>
    </ligand>
</feature>
<feature type="binding site" evidence="1">
    <location>
        <position position="30"/>
    </location>
    <ligand>
        <name>S-adenosyl-L-methionine</name>
        <dbReference type="ChEBI" id="CHEBI:59789"/>
    </ligand>
</feature>
<feature type="binding site" evidence="1">
    <location>
        <position position="55"/>
    </location>
    <ligand>
        <name>S-adenosyl-L-methionine</name>
        <dbReference type="ChEBI" id="CHEBI:59789"/>
    </ligand>
</feature>
<feature type="binding site" evidence="1">
    <location>
        <position position="77"/>
    </location>
    <ligand>
        <name>S-adenosyl-L-methionine</name>
        <dbReference type="ChEBI" id="CHEBI:59789"/>
    </ligand>
</feature>
<feature type="binding site" evidence="1">
    <location>
        <position position="103"/>
    </location>
    <ligand>
        <name>S-adenosyl-L-methionine</name>
        <dbReference type="ChEBI" id="CHEBI:59789"/>
    </ligand>
</feature>
<feature type="binding site" evidence="1">
    <location>
        <position position="122"/>
    </location>
    <ligand>
        <name>S-adenosyl-L-methionine</name>
        <dbReference type="ChEBI" id="CHEBI:59789"/>
    </ligand>
</feature>
<proteinExistence type="inferred from homology"/>
<gene>
    <name evidence="1" type="primary">rsmA</name>
    <name evidence="1" type="synonym">ksgA</name>
    <name type="ordered locus">RHOS4_14970</name>
    <name type="ORF">RSP_2905</name>
</gene>